<name>RRP7A_PONAB</name>
<sequence>MVARRRKRAARDPEDRIPSPLGYAAIPIKFSEKQQASHYLYVRAHSVRQGTKSTWPQKRTLFVLNVPPYCTEESLSRLLSSCGPLQSVELQEKPDLADSPKESRSKFFHPKPVPGFRVGYVVFQKPSGVSAALALQGPLLVSTESHPVKTGIHKWISDYADSVPDPEALRVEVDTFMEAYDQKIAEEEAKAKEEEGVPDEEGWVKVTRRGRRPVLPRTEAASLRVLERERRKRTRKELLNFYAWQHRESKMEHLAQLRKKFEEDKQRIELLRAQRKFRPY</sequence>
<accession>Q5RA17</accession>
<comment type="function">
    <text evidence="1">Nucleolar protein that is involved in ribosomal RNA (rRNA) processing. Also plays a role in primary cilia resorption, and cell cycle progression in neurogenesis and neocortex development. Part of the small subunit (SSU) processome, first precursor of the small eukaryotic ribosomal subunit. During the assembly of the SSU processome in the nucleolus, many ribosome biogenesis factors, an RNA chaperone and ribosomal proteins associate with the nascent pre-rRNA and work in concert to generate RNA folding, modifications, rearrangements and cleavage as well as targeted degradation of pre-ribosomal RNA by the RNA exosome.</text>
</comment>
<comment type="subunit">
    <text evidence="1">Part of the small subunit (SSU) processome, composed of more than 70 proteins and the RNA chaperone small nucleolar RNA (snoRNA) U3. Interacts with NOL6; required for NOL6 localization to nucleolus.</text>
</comment>
<comment type="subcellular location">
    <subcellularLocation>
        <location evidence="1">Nucleus</location>
        <location evidence="1">Nucleolus</location>
    </subcellularLocation>
    <subcellularLocation>
        <location evidence="1">Cell projection</location>
        <location evidence="1">Cilium</location>
    </subcellularLocation>
    <subcellularLocation>
        <location evidence="1">Cytoplasm</location>
        <location evidence="1">Cytoskeleton</location>
        <location evidence="1">Microtubule organizing center</location>
        <location evidence="1">Centrosome</location>
    </subcellularLocation>
</comment>
<comment type="similarity">
    <text evidence="3">Belongs to the RRP7 family.</text>
</comment>
<proteinExistence type="evidence at transcript level"/>
<evidence type="ECO:0000250" key="1">
    <source>
        <dbReference type="UniProtKB" id="Q9Y3A4"/>
    </source>
</evidence>
<evidence type="ECO:0000255" key="2"/>
<evidence type="ECO:0000305" key="3"/>
<dbReference type="EMBL" id="CR859208">
    <property type="protein sequence ID" value="CAH91393.1"/>
    <property type="molecule type" value="mRNA"/>
</dbReference>
<dbReference type="RefSeq" id="NP_001125823.1">
    <property type="nucleotide sequence ID" value="NM_001132351.1"/>
</dbReference>
<dbReference type="SMR" id="Q5RA17"/>
<dbReference type="FunCoup" id="Q5RA17">
    <property type="interactions" value="1880"/>
</dbReference>
<dbReference type="STRING" id="9601.ENSPPYP00000013277"/>
<dbReference type="GeneID" id="100172751"/>
<dbReference type="KEGG" id="pon:100172751"/>
<dbReference type="CTD" id="27341"/>
<dbReference type="eggNOG" id="KOG4008">
    <property type="taxonomic scope" value="Eukaryota"/>
</dbReference>
<dbReference type="InParanoid" id="Q5RA17"/>
<dbReference type="OrthoDB" id="5390at2759"/>
<dbReference type="Proteomes" id="UP000001595">
    <property type="component" value="Unplaced"/>
</dbReference>
<dbReference type="GO" id="GO:0005813">
    <property type="term" value="C:centrosome"/>
    <property type="evidence" value="ECO:0000250"/>
    <property type="project" value="UniProtKB"/>
</dbReference>
<dbReference type="GO" id="GO:0005929">
    <property type="term" value="C:cilium"/>
    <property type="evidence" value="ECO:0000250"/>
    <property type="project" value="UniProtKB"/>
</dbReference>
<dbReference type="GO" id="GO:0032545">
    <property type="term" value="C:CURI complex"/>
    <property type="evidence" value="ECO:0007669"/>
    <property type="project" value="TreeGrafter"/>
</dbReference>
<dbReference type="GO" id="GO:0005737">
    <property type="term" value="C:cytoplasm"/>
    <property type="evidence" value="ECO:0007669"/>
    <property type="project" value="UniProtKB-KW"/>
</dbReference>
<dbReference type="GO" id="GO:0005730">
    <property type="term" value="C:nucleolus"/>
    <property type="evidence" value="ECO:0000250"/>
    <property type="project" value="UniProtKB"/>
</dbReference>
<dbReference type="GO" id="GO:0032040">
    <property type="term" value="C:small-subunit processome"/>
    <property type="evidence" value="ECO:0000250"/>
    <property type="project" value="UniProtKB"/>
</dbReference>
<dbReference type="GO" id="GO:0034456">
    <property type="term" value="C:UTP-C complex"/>
    <property type="evidence" value="ECO:0007669"/>
    <property type="project" value="TreeGrafter"/>
</dbReference>
<dbReference type="GO" id="GO:0003723">
    <property type="term" value="F:RNA binding"/>
    <property type="evidence" value="ECO:0007669"/>
    <property type="project" value="UniProtKB-KW"/>
</dbReference>
<dbReference type="GO" id="GO:0061523">
    <property type="term" value="P:cilium disassembly"/>
    <property type="evidence" value="ECO:0000250"/>
    <property type="project" value="UniProtKB"/>
</dbReference>
<dbReference type="GO" id="GO:0000028">
    <property type="term" value="P:ribosomal small subunit assembly"/>
    <property type="evidence" value="ECO:0007669"/>
    <property type="project" value="TreeGrafter"/>
</dbReference>
<dbReference type="GO" id="GO:0042274">
    <property type="term" value="P:ribosomal small subunit biogenesis"/>
    <property type="evidence" value="ECO:0000250"/>
    <property type="project" value="UniProtKB"/>
</dbReference>
<dbReference type="GO" id="GO:0042254">
    <property type="term" value="P:ribosome biogenesis"/>
    <property type="evidence" value="ECO:0000250"/>
    <property type="project" value="UniProtKB"/>
</dbReference>
<dbReference type="GO" id="GO:0006364">
    <property type="term" value="P:rRNA processing"/>
    <property type="evidence" value="ECO:0000250"/>
    <property type="project" value="UniProtKB"/>
</dbReference>
<dbReference type="CDD" id="cd12294">
    <property type="entry name" value="RRM_Rrp7A"/>
    <property type="match status" value="1"/>
</dbReference>
<dbReference type="CDD" id="cd12951">
    <property type="entry name" value="RRP7_Rrp7A"/>
    <property type="match status" value="1"/>
</dbReference>
<dbReference type="FunFam" id="3.30.70.330:FF:000512">
    <property type="entry name" value="Ribosomal RNA-processing 7 homolog A"/>
    <property type="match status" value="1"/>
</dbReference>
<dbReference type="Gene3D" id="3.30.70.330">
    <property type="match status" value="1"/>
</dbReference>
<dbReference type="Gene3D" id="6.10.250.1770">
    <property type="match status" value="1"/>
</dbReference>
<dbReference type="InterPro" id="IPR012677">
    <property type="entry name" value="Nucleotide-bd_a/b_plait_sf"/>
</dbReference>
<dbReference type="InterPro" id="IPR035979">
    <property type="entry name" value="RBD_domain_sf"/>
</dbReference>
<dbReference type="InterPro" id="IPR040447">
    <property type="entry name" value="RRM_Rrp7"/>
</dbReference>
<dbReference type="InterPro" id="IPR040446">
    <property type="entry name" value="RRP7"/>
</dbReference>
<dbReference type="InterPro" id="IPR024326">
    <property type="entry name" value="RRP7_C"/>
</dbReference>
<dbReference type="InterPro" id="IPR034890">
    <property type="entry name" value="Rrp7A_RRM"/>
</dbReference>
<dbReference type="PANTHER" id="PTHR13191">
    <property type="entry name" value="RIBOSOMAL RNA PROCESSING PROTEIN 7-RELATED"/>
    <property type="match status" value="1"/>
</dbReference>
<dbReference type="PANTHER" id="PTHR13191:SF0">
    <property type="entry name" value="RIBOSOMAL RNA-PROCESSING PROTEIN 7 HOMOLOG A-RELATED"/>
    <property type="match status" value="1"/>
</dbReference>
<dbReference type="Pfam" id="PF17799">
    <property type="entry name" value="RRM_Rrp7"/>
    <property type="match status" value="1"/>
</dbReference>
<dbReference type="Pfam" id="PF12923">
    <property type="entry name" value="RRP7"/>
    <property type="match status" value="1"/>
</dbReference>
<dbReference type="SUPFAM" id="SSF54928">
    <property type="entry name" value="RNA-binding domain, RBD"/>
    <property type="match status" value="1"/>
</dbReference>
<protein>
    <recommendedName>
        <fullName>Ribosomal RNA-processing protein 7 homolog A</fullName>
    </recommendedName>
    <alternativeName>
        <fullName>Gastric cancer antigen Zg14 homolog</fullName>
    </alternativeName>
</protein>
<keyword id="KW-0966">Cell projection</keyword>
<keyword id="KW-0963">Cytoplasm</keyword>
<keyword id="KW-0206">Cytoskeleton</keyword>
<keyword id="KW-0539">Nucleus</keyword>
<keyword id="KW-0597">Phosphoprotein</keyword>
<keyword id="KW-1185">Reference proteome</keyword>
<keyword id="KW-0694">RNA-binding</keyword>
<reference key="1">
    <citation type="submission" date="2004-11" db="EMBL/GenBank/DDBJ databases">
        <authorList>
            <consortium name="The German cDNA consortium"/>
        </authorList>
    </citation>
    <scope>NUCLEOTIDE SEQUENCE [LARGE SCALE MRNA]</scope>
    <source>
        <tissue>Brain cortex</tissue>
    </source>
</reference>
<gene>
    <name type="primary">RRP7A</name>
</gene>
<feature type="chain" id="PRO_0000082010" description="Ribosomal RNA-processing protein 7 homolog A">
    <location>
        <begin position="1"/>
        <end position="280"/>
    </location>
</feature>
<feature type="domain" description="RRM" evidence="2">
    <location>
        <begin position="59"/>
        <end position="159"/>
    </location>
</feature>
<feature type="modified residue" description="Phosphoserine" evidence="1">
    <location>
        <position position="99"/>
    </location>
</feature>
<organism>
    <name type="scientific">Pongo abelii</name>
    <name type="common">Sumatran orangutan</name>
    <name type="synonym">Pongo pygmaeus abelii</name>
    <dbReference type="NCBI Taxonomy" id="9601"/>
    <lineage>
        <taxon>Eukaryota</taxon>
        <taxon>Metazoa</taxon>
        <taxon>Chordata</taxon>
        <taxon>Craniata</taxon>
        <taxon>Vertebrata</taxon>
        <taxon>Euteleostomi</taxon>
        <taxon>Mammalia</taxon>
        <taxon>Eutheria</taxon>
        <taxon>Euarchontoglires</taxon>
        <taxon>Primates</taxon>
        <taxon>Haplorrhini</taxon>
        <taxon>Catarrhini</taxon>
        <taxon>Hominidae</taxon>
        <taxon>Pongo</taxon>
    </lineage>
</organism>